<evidence type="ECO:0000250" key="1"/>
<evidence type="ECO:0000250" key="2">
    <source>
        <dbReference type="UniProtKB" id="Q62847"/>
    </source>
</evidence>
<evidence type="ECO:0000250" key="3">
    <source>
        <dbReference type="UniProtKB" id="Q9UEY8"/>
    </source>
</evidence>
<evidence type="ECO:0000255" key="4"/>
<evidence type="ECO:0000256" key="5">
    <source>
        <dbReference type="SAM" id="MobiDB-lite"/>
    </source>
</evidence>
<evidence type="ECO:0000269" key="6">
    <source>
    </source>
</evidence>
<evidence type="ECO:0000305" key="7"/>
<evidence type="ECO:0007744" key="8">
    <source>
    </source>
</evidence>
<evidence type="ECO:0007744" key="9">
    <source>
    </source>
</evidence>
<proteinExistence type="evidence at protein level"/>
<gene>
    <name type="primary">Add3</name>
    <name type="synonym">Addl</name>
</gene>
<reference key="1">
    <citation type="journal article" date="2000" name="Mamm. Genome">
        <title>The mouse adducin gene family: alternative splicing and chromosomal localization.</title>
        <authorList>
            <person name="Suriyapperuma S.P."/>
            <person name="Lozovatsky L."/>
            <person name="Ciciotte S.L."/>
            <person name="Peters L.L."/>
            <person name="Gilligan D.M."/>
        </authorList>
    </citation>
    <scope>NUCLEOTIDE SEQUENCE [MRNA]</scope>
</reference>
<reference key="2">
    <citation type="journal article" date="2006" name="Nat. Genet.">
        <title>Positional cloning of Sorcs1, a type 2 diabetes quantitative trait locus.</title>
        <authorList>
            <person name="Clee S.M."/>
            <person name="Yandell B.S."/>
            <person name="Schueler K.M."/>
            <person name="Rabaglia M.E."/>
            <person name="Richards O.C."/>
            <person name="Raines S.M."/>
            <person name="Kabara E.A."/>
            <person name="Klass D.M."/>
            <person name="Mui E.T.-K."/>
            <person name="Stapleton D.S."/>
            <person name="Gray-Keller M.P."/>
            <person name="Young M.B."/>
            <person name="Stoehr J.P."/>
            <person name="Lan H."/>
            <person name="Boronenkov I."/>
            <person name="Raess P.W."/>
            <person name="Flowers M.T."/>
            <person name="Attie A.D."/>
        </authorList>
    </citation>
    <scope>NUCLEOTIDE SEQUENCE [GENOMIC DNA]</scope>
    <source>
        <strain>BTBR T+ tf/J</strain>
    </source>
</reference>
<reference key="3">
    <citation type="journal article" date="2005" name="Science">
        <title>The transcriptional landscape of the mammalian genome.</title>
        <authorList>
            <person name="Carninci P."/>
            <person name="Kasukawa T."/>
            <person name="Katayama S."/>
            <person name="Gough J."/>
            <person name="Frith M.C."/>
            <person name="Maeda N."/>
            <person name="Oyama R."/>
            <person name="Ravasi T."/>
            <person name="Lenhard B."/>
            <person name="Wells C."/>
            <person name="Kodzius R."/>
            <person name="Shimokawa K."/>
            <person name="Bajic V.B."/>
            <person name="Brenner S.E."/>
            <person name="Batalov S."/>
            <person name="Forrest A.R."/>
            <person name="Zavolan M."/>
            <person name="Davis M.J."/>
            <person name="Wilming L.G."/>
            <person name="Aidinis V."/>
            <person name="Allen J.E."/>
            <person name="Ambesi-Impiombato A."/>
            <person name="Apweiler R."/>
            <person name="Aturaliya R.N."/>
            <person name="Bailey T.L."/>
            <person name="Bansal M."/>
            <person name="Baxter L."/>
            <person name="Beisel K.W."/>
            <person name="Bersano T."/>
            <person name="Bono H."/>
            <person name="Chalk A.M."/>
            <person name="Chiu K.P."/>
            <person name="Choudhary V."/>
            <person name="Christoffels A."/>
            <person name="Clutterbuck D.R."/>
            <person name="Crowe M.L."/>
            <person name="Dalla E."/>
            <person name="Dalrymple B.P."/>
            <person name="de Bono B."/>
            <person name="Della Gatta G."/>
            <person name="di Bernardo D."/>
            <person name="Down T."/>
            <person name="Engstrom P."/>
            <person name="Fagiolini M."/>
            <person name="Faulkner G."/>
            <person name="Fletcher C.F."/>
            <person name="Fukushima T."/>
            <person name="Furuno M."/>
            <person name="Futaki S."/>
            <person name="Gariboldi M."/>
            <person name="Georgii-Hemming P."/>
            <person name="Gingeras T.R."/>
            <person name="Gojobori T."/>
            <person name="Green R.E."/>
            <person name="Gustincich S."/>
            <person name="Harbers M."/>
            <person name="Hayashi Y."/>
            <person name="Hensch T.K."/>
            <person name="Hirokawa N."/>
            <person name="Hill D."/>
            <person name="Huminiecki L."/>
            <person name="Iacono M."/>
            <person name="Ikeo K."/>
            <person name="Iwama A."/>
            <person name="Ishikawa T."/>
            <person name="Jakt M."/>
            <person name="Kanapin A."/>
            <person name="Katoh M."/>
            <person name="Kawasawa Y."/>
            <person name="Kelso J."/>
            <person name="Kitamura H."/>
            <person name="Kitano H."/>
            <person name="Kollias G."/>
            <person name="Krishnan S.P."/>
            <person name="Kruger A."/>
            <person name="Kummerfeld S.K."/>
            <person name="Kurochkin I.V."/>
            <person name="Lareau L.F."/>
            <person name="Lazarevic D."/>
            <person name="Lipovich L."/>
            <person name="Liu J."/>
            <person name="Liuni S."/>
            <person name="McWilliam S."/>
            <person name="Madan Babu M."/>
            <person name="Madera M."/>
            <person name="Marchionni L."/>
            <person name="Matsuda H."/>
            <person name="Matsuzawa S."/>
            <person name="Miki H."/>
            <person name="Mignone F."/>
            <person name="Miyake S."/>
            <person name="Morris K."/>
            <person name="Mottagui-Tabar S."/>
            <person name="Mulder N."/>
            <person name="Nakano N."/>
            <person name="Nakauchi H."/>
            <person name="Ng P."/>
            <person name="Nilsson R."/>
            <person name="Nishiguchi S."/>
            <person name="Nishikawa S."/>
            <person name="Nori F."/>
            <person name="Ohara O."/>
            <person name="Okazaki Y."/>
            <person name="Orlando V."/>
            <person name="Pang K.C."/>
            <person name="Pavan W.J."/>
            <person name="Pavesi G."/>
            <person name="Pesole G."/>
            <person name="Petrovsky N."/>
            <person name="Piazza S."/>
            <person name="Reed J."/>
            <person name="Reid J.F."/>
            <person name="Ring B.Z."/>
            <person name="Ringwald M."/>
            <person name="Rost B."/>
            <person name="Ruan Y."/>
            <person name="Salzberg S.L."/>
            <person name="Sandelin A."/>
            <person name="Schneider C."/>
            <person name="Schoenbach C."/>
            <person name="Sekiguchi K."/>
            <person name="Semple C.A."/>
            <person name="Seno S."/>
            <person name="Sessa L."/>
            <person name="Sheng Y."/>
            <person name="Shibata Y."/>
            <person name="Shimada H."/>
            <person name="Shimada K."/>
            <person name="Silva D."/>
            <person name="Sinclair B."/>
            <person name="Sperling S."/>
            <person name="Stupka E."/>
            <person name="Sugiura K."/>
            <person name="Sultana R."/>
            <person name="Takenaka Y."/>
            <person name="Taki K."/>
            <person name="Tammoja K."/>
            <person name="Tan S.L."/>
            <person name="Tang S."/>
            <person name="Taylor M.S."/>
            <person name="Tegner J."/>
            <person name="Teichmann S.A."/>
            <person name="Ueda H.R."/>
            <person name="van Nimwegen E."/>
            <person name="Verardo R."/>
            <person name="Wei C.L."/>
            <person name="Yagi K."/>
            <person name="Yamanishi H."/>
            <person name="Zabarovsky E."/>
            <person name="Zhu S."/>
            <person name="Zimmer A."/>
            <person name="Hide W."/>
            <person name="Bult C."/>
            <person name="Grimmond S.M."/>
            <person name="Teasdale R.D."/>
            <person name="Liu E.T."/>
            <person name="Brusic V."/>
            <person name="Quackenbush J."/>
            <person name="Wahlestedt C."/>
            <person name="Mattick J.S."/>
            <person name="Hume D.A."/>
            <person name="Kai C."/>
            <person name="Sasaki D."/>
            <person name="Tomaru Y."/>
            <person name="Fukuda S."/>
            <person name="Kanamori-Katayama M."/>
            <person name="Suzuki M."/>
            <person name="Aoki J."/>
            <person name="Arakawa T."/>
            <person name="Iida J."/>
            <person name="Imamura K."/>
            <person name="Itoh M."/>
            <person name="Kato T."/>
            <person name="Kawaji H."/>
            <person name="Kawagashira N."/>
            <person name="Kawashima T."/>
            <person name="Kojima M."/>
            <person name="Kondo S."/>
            <person name="Konno H."/>
            <person name="Nakano K."/>
            <person name="Ninomiya N."/>
            <person name="Nishio T."/>
            <person name="Okada M."/>
            <person name="Plessy C."/>
            <person name="Shibata K."/>
            <person name="Shiraki T."/>
            <person name="Suzuki S."/>
            <person name="Tagami M."/>
            <person name="Waki K."/>
            <person name="Watahiki A."/>
            <person name="Okamura-Oho Y."/>
            <person name="Suzuki H."/>
            <person name="Kawai J."/>
            <person name="Hayashizaki Y."/>
        </authorList>
    </citation>
    <scope>NUCLEOTIDE SEQUENCE [LARGE SCALE MRNA]</scope>
    <source>
        <strain>C57BL/6J</strain>
        <tissue>Skin</tissue>
    </source>
</reference>
<reference key="4">
    <citation type="submission" date="2005-07" db="EMBL/GenBank/DDBJ databases">
        <authorList>
            <person name="Mural R.J."/>
            <person name="Adams M.D."/>
            <person name="Myers E.W."/>
            <person name="Smith H.O."/>
            <person name="Venter J.C."/>
        </authorList>
    </citation>
    <scope>NUCLEOTIDE SEQUENCE [LARGE SCALE GENOMIC DNA]</scope>
</reference>
<reference key="5">
    <citation type="journal article" date="2004" name="Genome Res.">
        <title>The status, quality, and expansion of the NIH full-length cDNA project: the Mammalian Gene Collection (MGC).</title>
        <authorList>
            <consortium name="The MGC Project Team"/>
        </authorList>
    </citation>
    <scope>NUCLEOTIDE SEQUENCE [LARGE SCALE MRNA]</scope>
    <source>
        <tissue>Eye</tissue>
    </source>
</reference>
<reference key="6">
    <citation type="journal article" date="2021" name="Prog. Neurobiol.">
        <title>A gamma-adducin cleavage fragment induces neurite deficits and synaptic dysfunction in Alzheimer's disease.</title>
        <authorList>
            <person name="Xiong M."/>
            <person name="Zou L."/>
            <person name="Meng L."/>
            <person name="Zhang X."/>
            <person name="Tian Y."/>
            <person name="Zhang G."/>
            <person name="Yang J."/>
            <person name="Chen G."/>
            <person name="Xiong J."/>
            <person name="Ye K."/>
            <person name="Zhang Z."/>
        </authorList>
    </citation>
    <scope>PROTEIN SEQUENCE OF 343-357</scope>
    <scope>FUNCTION</scope>
    <scope>SUBCELLULAR LOCATION</scope>
    <scope>TISSUE SPECIFICITY</scope>
    <scope>CLEAVAGE BY AEP</scope>
    <scope>PTM</scope>
    <scope>IDENTIFICATION BY MASS SPECTROMETRY</scope>
    <scope>SITE</scope>
    <scope>MUTAGENESIS OF ASN-357; ASN-450 AND ASN-457</scope>
</reference>
<reference key="7">
    <citation type="journal article" date="2007" name="Proc. Natl. Acad. Sci. U.S.A.">
        <title>Large-scale phosphorylation analysis of mouse liver.</title>
        <authorList>
            <person name="Villen J."/>
            <person name="Beausoleil S.A."/>
            <person name="Gerber S.A."/>
            <person name="Gygi S.P."/>
        </authorList>
    </citation>
    <scope>PHOSPHORYLATION [LARGE SCALE ANALYSIS] AT SER-677 AND SER-681</scope>
    <scope>IDENTIFICATION BY MASS SPECTROMETRY [LARGE SCALE ANALYSIS]</scope>
    <source>
        <tissue>Liver</tissue>
    </source>
</reference>
<reference key="8">
    <citation type="journal article" date="2010" name="Cell">
        <title>A tissue-specific atlas of mouse protein phosphorylation and expression.</title>
        <authorList>
            <person name="Huttlin E.L."/>
            <person name="Jedrychowski M.P."/>
            <person name="Elias J.E."/>
            <person name="Goswami T."/>
            <person name="Rad R."/>
            <person name="Beausoleil S.A."/>
            <person name="Villen J."/>
            <person name="Haas W."/>
            <person name="Sowa M.E."/>
            <person name="Gygi S.P."/>
        </authorList>
    </citation>
    <scope>PHOSPHORYLATION [LARGE SCALE ANALYSIS] AT SER-31; SER-42; SER-64; SER-402; SER-414; SER-423; SER-583; SER-585; SER-590; SER-673; SER-677; SER-679; SER-681 AND SER-683</scope>
    <scope>IDENTIFICATION BY MASS SPECTROMETRY [LARGE SCALE ANALYSIS]</scope>
    <source>
        <tissue>Brain</tissue>
        <tissue>Brown adipose tissue</tissue>
        <tissue>Heart</tissue>
        <tissue>Kidney</tissue>
        <tissue>Liver</tissue>
        <tissue>Lung</tissue>
        <tissue>Pancreas</tissue>
        <tissue>Spleen</tissue>
        <tissue>Testis</tissue>
    </source>
</reference>
<dbReference type="EMBL" id="AF100424">
    <property type="protein sequence ID" value="AAF24974.1"/>
    <property type="molecule type" value="mRNA"/>
</dbReference>
<dbReference type="EMBL" id="AF100425">
    <property type="protein sequence ID" value="AAF24975.1"/>
    <property type="molecule type" value="mRNA"/>
</dbReference>
<dbReference type="EMBL" id="DQ479918">
    <property type="protein sequence ID" value="ABF48499.1"/>
    <property type="molecule type" value="Genomic_DNA"/>
</dbReference>
<dbReference type="EMBL" id="AK019491">
    <property type="protein sequence ID" value="BAB31757.1"/>
    <property type="molecule type" value="mRNA"/>
</dbReference>
<dbReference type="EMBL" id="AK028481">
    <property type="protein sequence ID" value="BAC25974.1"/>
    <property type="molecule type" value="mRNA"/>
</dbReference>
<dbReference type="EMBL" id="CH466585">
    <property type="protein sequence ID" value="EDL01690.1"/>
    <property type="molecule type" value="Genomic_DNA"/>
</dbReference>
<dbReference type="EMBL" id="BC037116">
    <property type="protein sequence ID" value="AAH37116.1"/>
    <property type="molecule type" value="mRNA"/>
</dbReference>
<dbReference type="CCDS" id="CCDS29900.1">
    <molecule id="Q9QYB5-1"/>
</dbReference>
<dbReference type="CCDS" id="CCDS50467.1">
    <molecule id="Q9QYB5-2"/>
</dbReference>
<dbReference type="RefSeq" id="NP_001157571.1">
    <molecule id="Q9QYB5-1"/>
    <property type="nucleotide sequence ID" value="NM_001164099.3"/>
</dbReference>
<dbReference type="RefSeq" id="NP_001157572.1">
    <molecule id="Q9QYB5-2"/>
    <property type="nucleotide sequence ID" value="NM_001164100.3"/>
</dbReference>
<dbReference type="RefSeq" id="NP_001157573.1">
    <molecule id="Q9QYB5-2"/>
    <property type="nucleotide sequence ID" value="NM_001164101.3"/>
</dbReference>
<dbReference type="RefSeq" id="NP_001264029.1">
    <molecule id="Q9QYB5-1"/>
    <property type="nucleotide sequence ID" value="NM_001277100.2"/>
</dbReference>
<dbReference type="RefSeq" id="NP_001400915.1">
    <molecule id="Q9QYB5-1"/>
    <property type="nucleotide sequence ID" value="NM_001413986.1"/>
</dbReference>
<dbReference type="RefSeq" id="NP_001400916.1">
    <molecule id="Q9QYB5-2"/>
    <property type="nucleotide sequence ID" value="NM_001413987.1"/>
</dbReference>
<dbReference type="RefSeq" id="NP_038786.2">
    <molecule id="Q9QYB5-1"/>
    <property type="nucleotide sequence ID" value="NM_013758.4"/>
</dbReference>
<dbReference type="RefSeq" id="XP_030106819.1">
    <molecule id="Q9QYB5-1"/>
    <property type="nucleotide sequence ID" value="XM_030250959.2"/>
</dbReference>
<dbReference type="RefSeq" id="XP_030106820.1">
    <molecule id="Q9QYB5-1"/>
    <property type="nucleotide sequence ID" value="XM_030250960.2"/>
</dbReference>
<dbReference type="RefSeq" id="XP_030106821.1">
    <molecule id="Q9QYB5-1"/>
    <property type="nucleotide sequence ID" value="XM_030250961.2"/>
</dbReference>
<dbReference type="RefSeq" id="XP_030106823.1">
    <molecule id="Q9QYB5-1"/>
    <property type="nucleotide sequence ID" value="XM_030250963.2"/>
</dbReference>
<dbReference type="RefSeq" id="XP_030106825.1">
    <molecule id="Q9QYB5-1"/>
    <property type="nucleotide sequence ID" value="XM_030250965.2"/>
</dbReference>
<dbReference type="SMR" id="Q9QYB5"/>
<dbReference type="BioGRID" id="205169">
    <property type="interactions" value="9"/>
</dbReference>
<dbReference type="FunCoup" id="Q9QYB5">
    <property type="interactions" value="2118"/>
</dbReference>
<dbReference type="IntAct" id="Q9QYB5">
    <property type="interactions" value="3"/>
</dbReference>
<dbReference type="MINT" id="Q9QYB5"/>
<dbReference type="STRING" id="10090.ENSMUSP00000025999"/>
<dbReference type="GlyGen" id="Q9QYB5">
    <property type="glycosylation" value="1 site, 1 N-linked glycan (1 site)"/>
</dbReference>
<dbReference type="iPTMnet" id="Q9QYB5"/>
<dbReference type="PhosphoSitePlus" id="Q9QYB5"/>
<dbReference type="SwissPalm" id="Q9QYB5"/>
<dbReference type="jPOST" id="Q9QYB5"/>
<dbReference type="PaxDb" id="10090-ENSMUSP00000107370"/>
<dbReference type="PeptideAtlas" id="Q9QYB5"/>
<dbReference type="ProteomicsDB" id="296108">
    <molecule id="Q9QYB5-1"/>
</dbReference>
<dbReference type="ProteomicsDB" id="296109">
    <molecule id="Q9QYB5-2"/>
</dbReference>
<dbReference type="Pumba" id="Q9QYB5"/>
<dbReference type="Antibodypedia" id="4067">
    <property type="antibodies" value="206 antibodies from 32 providers"/>
</dbReference>
<dbReference type="DNASU" id="27360"/>
<dbReference type="Ensembl" id="ENSMUST00000025999.7">
    <molecule id="Q9QYB5-1"/>
    <property type="protein sequence ID" value="ENSMUSP00000025999.7"/>
    <property type="gene ID" value="ENSMUSG00000025026.16"/>
</dbReference>
<dbReference type="Ensembl" id="ENSMUST00000050096.15">
    <molecule id="Q9QYB5-2"/>
    <property type="protein sequence ID" value="ENSMUSP00000052245.8"/>
    <property type="gene ID" value="ENSMUSG00000025026.16"/>
</dbReference>
<dbReference type="Ensembl" id="ENSMUST00000111741.10">
    <molecule id="Q9QYB5-2"/>
    <property type="protein sequence ID" value="ENSMUSP00000107370.4"/>
    <property type="gene ID" value="ENSMUSG00000025026.16"/>
</dbReference>
<dbReference type="Ensembl" id="ENSMUST00000235846.2">
    <molecule id="Q9QYB5-2"/>
    <property type="protein sequence ID" value="ENSMUSP00000157970.2"/>
    <property type="gene ID" value="ENSMUSG00000025026.16"/>
</dbReference>
<dbReference type="Ensembl" id="ENSMUST00000236296.2">
    <molecule id="Q9QYB5-1"/>
    <property type="protein sequence ID" value="ENSMUSP00000157697.2"/>
    <property type="gene ID" value="ENSMUSG00000025026.16"/>
</dbReference>
<dbReference type="Ensembl" id="ENSMUST00000237224.2">
    <molecule id="Q9QYB5-2"/>
    <property type="protein sequence ID" value="ENSMUSP00000158368.2"/>
    <property type="gene ID" value="ENSMUSG00000025026.16"/>
</dbReference>
<dbReference type="Ensembl" id="ENSMUST00000237301.2">
    <molecule id="Q9QYB5-1"/>
    <property type="protein sequence ID" value="ENSMUSP00000158149.2"/>
    <property type="gene ID" value="ENSMUSG00000025026.16"/>
</dbReference>
<dbReference type="Ensembl" id="ENSMUST00000237430.2">
    <molecule id="Q9QYB5-1"/>
    <property type="protein sequence ID" value="ENSMUSP00000157955.2"/>
    <property type="gene ID" value="ENSMUSG00000025026.16"/>
</dbReference>
<dbReference type="Ensembl" id="ENSMUST00000237832.2">
    <molecule id="Q9QYB5-2"/>
    <property type="protein sequence ID" value="ENSMUSP00000157432.2"/>
    <property type="gene ID" value="ENSMUSG00000025026.16"/>
</dbReference>
<dbReference type="Ensembl" id="ENSMUST00000238130.2">
    <molecule id="Q9QYB5-2"/>
    <property type="protein sequence ID" value="ENSMUSP00000158154.2"/>
    <property type="gene ID" value="ENSMUSG00000025026.16"/>
</dbReference>
<dbReference type="GeneID" id="27360"/>
<dbReference type="KEGG" id="mmu:27360"/>
<dbReference type="UCSC" id="uc008hwi.3">
    <molecule id="Q9QYB5-1"/>
    <property type="organism name" value="mouse"/>
</dbReference>
<dbReference type="AGR" id="MGI:1351615"/>
<dbReference type="CTD" id="120"/>
<dbReference type="MGI" id="MGI:1351615">
    <property type="gene designation" value="Add3"/>
</dbReference>
<dbReference type="VEuPathDB" id="HostDB:ENSMUSG00000025026"/>
<dbReference type="eggNOG" id="KOG3699">
    <property type="taxonomic scope" value="Eukaryota"/>
</dbReference>
<dbReference type="GeneTree" id="ENSGT00940000155257"/>
<dbReference type="HOGENOM" id="CLU_006033_9_2_1"/>
<dbReference type="InParanoid" id="Q9QYB5"/>
<dbReference type="OMA" id="XVRISKE"/>
<dbReference type="OrthoDB" id="3238794at2759"/>
<dbReference type="PhylomeDB" id="Q9QYB5"/>
<dbReference type="TreeFam" id="TF313003"/>
<dbReference type="Reactome" id="R-MMU-5223345">
    <property type="pathway name" value="Miscellaneous transport and binding events"/>
</dbReference>
<dbReference type="Reactome" id="R-MMU-9013405">
    <property type="pathway name" value="RHOD GTPase cycle"/>
</dbReference>
<dbReference type="Reactome" id="R-MMU-9035034">
    <property type="pathway name" value="RHOF GTPase cycle"/>
</dbReference>
<dbReference type="BioGRID-ORCS" id="27360">
    <property type="hits" value="0 hits in 77 CRISPR screens"/>
</dbReference>
<dbReference type="CD-CODE" id="CE726F99">
    <property type="entry name" value="Postsynaptic density"/>
</dbReference>
<dbReference type="ChiTaRS" id="Add3">
    <property type="organism name" value="mouse"/>
</dbReference>
<dbReference type="PRO" id="PR:Q9QYB5"/>
<dbReference type="Proteomes" id="UP000000589">
    <property type="component" value="Chromosome 19"/>
</dbReference>
<dbReference type="RNAct" id="Q9QYB5">
    <property type="molecule type" value="protein"/>
</dbReference>
<dbReference type="Bgee" id="ENSMUSG00000025026">
    <property type="expression patterns" value="Expressed in gastrula and 260 other cell types or tissues"/>
</dbReference>
<dbReference type="ExpressionAtlas" id="Q9QYB5">
    <property type="expression patterns" value="baseline and differential"/>
</dbReference>
<dbReference type="GO" id="GO:0005903">
    <property type="term" value="C:brush border"/>
    <property type="evidence" value="ECO:0000314"/>
    <property type="project" value="UniProtKB"/>
</dbReference>
<dbReference type="GO" id="GO:0005938">
    <property type="term" value="C:cell cortex"/>
    <property type="evidence" value="ECO:0000314"/>
    <property type="project" value="MGI"/>
</dbReference>
<dbReference type="GO" id="GO:0005911">
    <property type="term" value="C:cell-cell junction"/>
    <property type="evidence" value="ECO:0000314"/>
    <property type="project" value="MGI"/>
</dbReference>
<dbReference type="GO" id="GO:0000794">
    <property type="term" value="C:condensed nuclear chromosome"/>
    <property type="evidence" value="ECO:0000314"/>
    <property type="project" value="MGI"/>
</dbReference>
<dbReference type="GO" id="GO:0005737">
    <property type="term" value="C:cytoplasm"/>
    <property type="evidence" value="ECO:0000314"/>
    <property type="project" value="MGI"/>
</dbReference>
<dbReference type="GO" id="GO:0005856">
    <property type="term" value="C:cytoskeleton"/>
    <property type="evidence" value="ECO:0000314"/>
    <property type="project" value="MGI"/>
</dbReference>
<dbReference type="GO" id="GO:0016020">
    <property type="term" value="C:membrane"/>
    <property type="evidence" value="ECO:0000314"/>
    <property type="project" value="MGI"/>
</dbReference>
<dbReference type="GO" id="GO:0005886">
    <property type="term" value="C:plasma membrane"/>
    <property type="evidence" value="ECO:0007669"/>
    <property type="project" value="UniProtKB-SubCell"/>
</dbReference>
<dbReference type="GO" id="GO:0014069">
    <property type="term" value="C:postsynaptic density"/>
    <property type="evidence" value="ECO:0000314"/>
    <property type="project" value="MGI"/>
</dbReference>
<dbReference type="GO" id="GO:0003779">
    <property type="term" value="F:actin binding"/>
    <property type="evidence" value="ECO:0007669"/>
    <property type="project" value="UniProtKB-KW"/>
</dbReference>
<dbReference type="GO" id="GO:0005516">
    <property type="term" value="F:calmodulin binding"/>
    <property type="evidence" value="ECO:0007669"/>
    <property type="project" value="UniProtKB-KW"/>
</dbReference>
<dbReference type="GO" id="GO:0005080">
    <property type="term" value="F:protein kinase C binding"/>
    <property type="evidence" value="ECO:0007669"/>
    <property type="project" value="Ensembl"/>
</dbReference>
<dbReference type="GO" id="GO:0005200">
    <property type="term" value="F:structural constituent of cytoskeleton"/>
    <property type="evidence" value="ECO:0000314"/>
    <property type="project" value="MGI"/>
</dbReference>
<dbReference type="GO" id="GO:0051495">
    <property type="term" value="P:positive regulation of cytoskeleton organization"/>
    <property type="evidence" value="ECO:0007669"/>
    <property type="project" value="Ensembl"/>
</dbReference>
<dbReference type="GO" id="GO:0045907">
    <property type="term" value="P:positive regulation of vasoconstriction"/>
    <property type="evidence" value="ECO:0007669"/>
    <property type="project" value="Ensembl"/>
</dbReference>
<dbReference type="GO" id="GO:0009410">
    <property type="term" value="P:response to xenobiotic stimulus"/>
    <property type="evidence" value="ECO:0007669"/>
    <property type="project" value="Ensembl"/>
</dbReference>
<dbReference type="FunFam" id="3.40.225.10:FF:000004">
    <property type="entry name" value="gamma-adducin isoform X1"/>
    <property type="match status" value="1"/>
</dbReference>
<dbReference type="Gene3D" id="3.40.225.10">
    <property type="entry name" value="Class II aldolase/adducin N-terminal domain"/>
    <property type="match status" value="1"/>
</dbReference>
<dbReference type="InterPro" id="IPR051017">
    <property type="entry name" value="Aldolase-II_Adducin_sf"/>
</dbReference>
<dbReference type="InterPro" id="IPR001303">
    <property type="entry name" value="Aldolase_II/adducin_N"/>
</dbReference>
<dbReference type="InterPro" id="IPR036409">
    <property type="entry name" value="Aldolase_II/adducin_N_sf"/>
</dbReference>
<dbReference type="PANTHER" id="PTHR10672">
    <property type="entry name" value="ADDUCIN"/>
    <property type="match status" value="1"/>
</dbReference>
<dbReference type="PANTHER" id="PTHR10672:SF5">
    <property type="entry name" value="GAMMA-ADDUCIN"/>
    <property type="match status" value="1"/>
</dbReference>
<dbReference type="Pfam" id="PF00596">
    <property type="entry name" value="Aldolase_II"/>
    <property type="match status" value="1"/>
</dbReference>
<dbReference type="SMART" id="SM01007">
    <property type="entry name" value="Aldolase_II"/>
    <property type="match status" value="1"/>
</dbReference>
<dbReference type="SUPFAM" id="SSF53639">
    <property type="entry name" value="AraD/HMP-PK domain-like"/>
    <property type="match status" value="1"/>
</dbReference>
<keyword id="KW-0007">Acetylation</keyword>
<keyword id="KW-0009">Actin-binding</keyword>
<keyword id="KW-0025">Alternative splicing</keyword>
<keyword id="KW-0112">Calmodulin-binding</keyword>
<keyword id="KW-1003">Cell membrane</keyword>
<keyword id="KW-0963">Cytoplasm</keyword>
<keyword id="KW-0206">Cytoskeleton</keyword>
<keyword id="KW-0903">Direct protein sequencing</keyword>
<keyword id="KW-1017">Isopeptide bond</keyword>
<keyword id="KW-0472">Membrane</keyword>
<keyword id="KW-0597">Phosphoprotein</keyword>
<keyword id="KW-1185">Reference proteome</keyword>
<keyword id="KW-0832">Ubl conjugation</keyword>
<feature type="initiator methionine" description="Removed" evidence="3">
    <location>
        <position position="1"/>
    </location>
</feature>
<feature type="chain" id="PRO_0000218537" description="Gamma-adducin">
    <location>
        <begin position="2"/>
        <end position="706"/>
    </location>
</feature>
<feature type="region of interest" description="Disordered" evidence="5">
    <location>
        <begin position="1"/>
        <end position="23"/>
    </location>
</feature>
<feature type="region of interest" description="Disordered" evidence="5">
    <location>
        <begin position="471"/>
        <end position="495"/>
    </location>
</feature>
<feature type="region of interest" description="Disordered" evidence="5">
    <location>
        <begin position="534"/>
        <end position="556"/>
    </location>
</feature>
<feature type="region of interest" description="Disordered" evidence="5">
    <location>
        <begin position="574"/>
        <end position="610"/>
    </location>
</feature>
<feature type="region of interest" description="Disordered" evidence="5">
    <location>
        <begin position="651"/>
        <end position="706"/>
    </location>
</feature>
<feature type="region of interest" description="Interaction with calmodulin" evidence="4">
    <location>
        <begin position="684"/>
        <end position="701"/>
    </location>
</feature>
<feature type="compositionally biased region" description="Low complexity" evidence="5">
    <location>
        <begin position="1"/>
        <end position="11"/>
    </location>
</feature>
<feature type="compositionally biased region" description="Low complexity" evidence="5">
    <location>
        <begin position="590"/>
        <end position="605"/>
    </location>
</feature>
<feature type="compositionally biased region" description="Low complexity" evidence="5">
    <location>
        <begin position="651"/>
        <end position="662"/>
    </location>
</feature>
<feature type="compositionally biased region" description="Basic residues" evidence="5">
    <location>
        <begin position="682"/>
        <end position="706"/>
    </location>
</feature>
<feature type="site" description="Cleavage by asparagine endopeptidase (AEP)" evidence="6">
    <location>
        <position position="357"/>
    </location>
</feature>
<feature type="modified residue" description="N-acetylserine" evidence="3">
    <location>
        <position position="2"/>
    </location>
</feature>
<feature type="modified residue" description="Phosphoserine" evidence="9">
    <location>
        <position position="31"/>
    </location>
</feature>
<feature type="modified residue" description="Phosphoserine" evidence="9">
    <location>
        <position position="42"/>
    </location>
</feature>
<feature type="modified residue" description="Phosphoserine" evidence="9">
    <location>
        <position position="64"/>
    </location>
</feature>
<feature type="modified residue" description="Phosphoserine" evidence="9">
    <location>
        <position position="402"/>
    </location>
</feature>
<feature type="modified residue" description="Phosphoserine" evidence="9">
    <location>
        <position position="414"/>
    </location>
</feature>
<feature type="modified residue" description="Phosphoserine" evidence="9">
    <location>
        <position position="423"/>
    </location>
</feature>
<feature type="modified residue" description="Phosphoserine" evidence="3">
    <location>
        <position position="442"/>
    </location>
</feature>
<feature type="modified residue" description="Phosphoserine" evidence="3">
    <location>
        <position position="461"/>
    </location>
</feature>
<feature type="modified residue" description="Phosphoserine" evidence="9">
    <location>
        <position position="583"/>
    </location>
</feature>
<feature type="modified residue" description="Phosphoserine" evidence="9">
    <location>
        <position position="585"/>
    </location>
</feature>
<feature type="modified residue" description="Phosphoserine" evidence="9">
    <location>
        <position position="590"/>
    </location>
</feature>
<feature type="modified residue" description="Phosphoserine" evidence="9">
    <location>
        <position position="673"/>
    </location>
</feature>
<feature type="modified residue" description="Phosphoserine" evidence="8 9">
    <location>
        <position position="677"/>
    </location>
</feature>
<feature type="modified residue" description="Phosphoserine" evidence="9">
    <location>
        <position position="679"/>
    </location>
</feature>
<feature type="modified residue" description="Phosphoserine" evidence="8 9">
    <location>
        <position position="681"/>
    </location>
</feature>
<feature type="modified residue" description="Phosphoserine" evidence="9">
    <location>
        <position position="683"/>
    </location>
</feature>
<feature type="cross-link" description="Glycyl lysine isopeptide (Lys-Gly) (interchain with G-Cter in SUMO2)" evidence="3">
    <location>
        <position position="484"/>
    </location>
</feature>
<feature type="splice variant" id="VSP_000189" description="In isoform 1." evidence="7">
    <location>
        <begin position="578"/>
        <end position="609"/>
    </location>
</feature>
<feature type="mutagenesis site" description="Loss of cleavage by asparagine endopeptidase (AEP)." evidence="6">
    <original>N</original>
    <variation>A</variation>
    <location>
        <position position="357"/>
    </location>
</feature>
<feature type="mutagenesis site" description="No effect on cleavage by asparagine endopeptidase (AEP)." evidence="6">
    <original>N</original>
    <variation>A</variation>
    <location>
        <position position="450"/>
    </location>
</feature>
<feature type="mutagenesis site" description="No effect on cleavage by asparagine endopeptidase (AEP)." evidence="6">
    <original>N</original>
    <variation>A</variation>
    <location>
        <position position="457"/>
    </location>
</feature>
<feature type="sequence conflict" description="In Ref. 3; BAB31757." evidence="7" ref="3">
    <original>R</original>
    <variation>G</variation>
    <location>
        <position position="37"/>
    </location>
</feature>
<feature type="sequence conflict" description="In Ref. 1; AAF24974/AAF24975." evidence="7" ref="1">
    <original>T</original>
    <variation>S</variation>
    <location>
        <position position="377"/>
    </location>
</feature>
<accession>Q9QYB5</accession>
<accession>Q8JZT6</accession>
<accession>Q9D2M5</accession>
<accession>Q9QYB6</accession>
<name>ADDG_MOUSE</name>
<organism>
    <name type="scientific">Mus musculus</name>
    <name type="common">Mouse</name>
    <dbReference type="NCBI Taxonomy" id="10090"/>
    <lineage>
        <taxon>Eukaryota</taxon>
        <taxon>Metazoa</taxon>
        <taxon>Chordata</taxon>
        <taxon>Craniata</taxon>
        <taxon>Vertebrata</taxon>
        <taxon>Euteleostomi</taxon>
        <taxon>Mammalia</taxon>
        <taxon>Eutheria</taxon>
        <taxon>Euarchontoglires</taxon>
        <taxon>Glires</taxon>
        <taxon>Rodentia</taxon>
        <taxon>Myomorpha</taxon>
        <taxon>Muroidea</taxon>
        <taxon>Muridae</taxon>
        <taxon>Murinae</taxon>
        <taxon>Mus</taxon>
        <taxon>Mus</taxon>
    </lineage>
</organism>
<sequence length="706" mass="78777">MSSDTSPAVVTTPPPPSMPHKERYFDRINESDPEYLRERNMSPDLRQDFNMMEQRKRVTQILQSPAFREDLECLIQEQMKKGHNPSGLLALQQIADYIVTSSFSGFSSPSLSLGMVTPINDLPGADTSSYVKGEKLTRCKLASLYRLADLFGWAHLANTYISVRISKEQDHIIIIPRGLSFSEATASTLVKVNIIGEVVDQGSTDLKIDHTGFSPHAAIYSTRPDVKCVIHIHTLATAAVSSMKCGILPISQESLILGDVAYYDYQGSLDEEEERIELQKVLGPSCKVLVLRNHGMVALGETLEEAFHYIFNVQMACEIQVQAVAGAGGVDNLLVLDLQKYKAFTHGVAMSGGGGVNMASHQKWKVGEIEFEGLMRTLDNLGYRTGYAYRHPLVREKPRHKSDVEIPATVTAFSFEDDSAPLSPLKFMAQRQQREKTRWLNSPNTYMKVNVPEESRNGETSPRTKITWMKAEDSSKVSSGTPIKIEDPNQFVPLNTNPTEVLEKRNKIREQNRYDLKTAGPQSQLLAGIVVDKPPSTMQFDDDDQGPPAPPNPFSHLLEGELEEYTKTIERKQQGLDDAEQGSLSDDAASVSQIQSQTQSPQSVPERLEENHELFSKSFTSMDAPVMIMNGKDEMHDVEDELAQRVSRLTTSTTIENIEITIKSPERTEEVLSPDGSPSKSPSKKKKKFRTPSFLKKNKKKEKVEA</sequence>
<comment type="function">
    <text evidence="2 3 6">Membrane-cytoskeleton-associated protein that promotes the assembly of the spectrin-actin network. Plays a role in actin filament capping. Binds to calmodulin (By similarity). Involved in myogenic reactivity of the renal afferent arteriole (Af-art), renal interlobular arteries and middle cerebral artery (MCA) to increased perfusion pressure. Involved in regulation of potassium channels in the vascular smooth muscle cells (VSMCs) of the Af-art and MCA ex vivo. Involved in regulation of glomerular capillary pressure, glomerular filtration rate (GFR) and glomerular nephrin expression in response to hypertension. Involved in renal blood flow (RBF) autoregulation. Plays a role in podocyte structure and function. Regulates globular monomer actin (G-actin) and filamentous polymer actin (F-actin) ratios in the primary podocytes affecting actin cytoskeleton organization. Regulates expression of synaptopodin, RhoA, Rac1 and CDC42 in the renal cortex and the primary podocytes. Regulates expression of nephrin in the glomeruli and in the primary podocytes, expression of nephrin and podocinin in the renal cortex, and expression of focal adhesion proteins integrin alpha-3 and integrin beta-1 in the glomeruli. Involved in cell migration and cell adhesion of podocytes, and in podocyte foot process effacement. Regulates expression of profibrotics markers MMP2, MMP9, TGF beta-1, tubular tight junction protein E-cadherin, and mesenchymal markers vimentin and alpha-SMA (By similarity). Promotes the growth of neurites (PubMed:33992672).</text>
</comment>
<comment type="subunit">
    <text>Heterodimer of an alpha and a gamma subunit.</text>
</comment>
<comment type="subcellular location">
    <subcellularLocation>
        <location evidence="2">Cytoplasm</location>
        <location evidence="2">Cytoskeleton</location>
    </subcellularLocation>
    <subcellularLocation>
        <location evidence="2">Cell membrane</location>
        <topology>Peripheral membrane protein</topology>
        <orientation>Cytoplasmic side</orientation>
    </subcellularLocation>
    <subcellularLocation>
        <location evidence="6">Cytoplasm</location>
    </subcellularLocation>
    <text evidence="6">Full-length protein and the cleavage fragment 358-706 localize mainly to the cytoplasm, while cleavage fragment 1-357 translocates from the cytoplasm to the nucleus.</text>
</comment>
<comment type="alternative products">
    <event type="alternative splicing"/>
    <isoform>
        <id>Q9QYB5-1</id>
        <name>2</name>
        <name>Long</name>
        <sequence type="displayed"/>
    </isoform>
    <isoform>
        <id>Q9QYB5-2</id>
        <name>1</name>
        <name>Short</name>
        <sequence type="described" ref="VSP_000189"/>
    </isoform>
    <text>Additional isoforms seem to exist.</text>
</comment>
<comment type="tissue specificity">
    <text evidence="6">Cleavage fragment 1-357 is expressed in the brain and the expression increases with age (at protein level). The fragment is expressed in the cortex, hippocampal CA1 region and hippocampal dentate gyrus in tau P301S transgenic mice, a mouse model for Alzheimer disease (AD) (at protein level). The fragment is only weakly expressed in non-transgenic mouse brain sections (at protein level).</text>
</comment>
<comment type="domain">
    <text>Comprised of three regions: a N-terminal protease-resistant globular head region, a short connecting subdomain, and a protease-sensitive tail region.</text>
</comment>
<comment type="PTM">
    <text evidence="1">Sumoylated.</text>
</comment>
<comment type="PTM">
    <text evidence="6">Proteolytically cleaved by asparagine endopeptidase (AEP) into 2 fragments. Overexpression of the 1-357 fragment induces neuronal apoptosis, and overexpression of either 1-357 or 358-706 fragment increases the degeneration of dendritic spines. Overexpression of the 1-357 fragment impairs neurite outgrowth by downregulating the expression of Rac2, and induces synaptic dysfunction and cognitive impairments in tau P301S transgenic mice, a mouse model for Alzheimer disease (AD).</text>
</comment>
<comment type="similarity">
    <text evidence="7">Belongs to the aldolase class II family. Adducin subfamily.</text>
</comment>
<protein>
    <recommendedName>
        <fullName>Gamma-adducin</fullName>
    </recommendedName>
    <alternativeName>
        <fullName>Adducin-like protein 70</fullName>
    </alternativeName>
</protein>